<accession>B9LZK1</accession>
<comment type="function">
    <text evidence="1">Catalyzes the attachment of proline to tRNA(Pro) in a two-step reaction: proline is first activated by ATP to form Pro-AMP and then transferred to the acceptor end of tRNA(Pro). As ProRS can inadvertently accommodate and process non-cognate amino acids such as alanine and cysteine, to avoid such errors it has two additional distinct editing activities against alanine. One activity is designated as 'pretransfer' editing and involves the tRNA(Pro)-independent hydrolysis of activated Ala-AMP. The other activity is designated 'posttransfer' editing and involves deacylation of mischarged Ala-tRNA(Pro). The misacylated Cys-tRNA(Pro) is not edited by ProRS.</text>
</comment>
<comment type="catalytic activity">
    <reaction evidence="1">
        <text>tRNA(Pro) + L-proline + ATP = L-prolyl-tRNA(Pro) + AMP + diphosphate</text>
        <dbReference type="Rhea" id="RHEA:14305"/>
        <dbReference type="Rhea" id="RHEA-COMP:9700"/>
        <dbReference type="Rhea" id="RHEA-COMP:9702"/>
        <dbReference type="ChEBI" id="CHEBI:30616"/>
        <dbReference type="ChEBI" id="CHEBI:33019"/>
        <dbReference type="ChEBI" id="CHEBI:60039"/>
        <dbReference type="ChEBI" id="CHEBI:78442"/>
        <dbReference type="ChEBI" id="CHEBI:78532"/>
        <dbReference type="ChEBI" id="CHEBI:456215"/>
        <dbReference type="EC" id="6.1.1.15"/>
    </reaction>
</comment>
<comment type="subunit">
    <text evidence="1">Homodimer.</text>
</comment>
<comment type="subcellular location">
    <subcellularLocation>
        <location evidence="1">Cytoplasm</location>
    </subcellularLocation>
</comment>
<comment type="domain">
    <text evidence="1">Consists of three domains: the N-terminal catalytic domain, the editing domain and the C-terminal anticodon-binding domain.</text>
</comment>
<comment type="similarity">
    <text evidence="1">Belongs to the class-II aminoacyl-tRNA synthetase family. ProS type 1 subfamily.</text>
</comment>
<protein>
    <recommendedName>
        <fullName evidence="1">Proline--tRNA ligase</fullName>
        <ecNumber evidence="1">6.1.1.15</ecNumber>
    </recommendedName>
    <alternativeName>
        <fullName evidence="1">Prolyl-tRNA synthetase</fullName>
        <shortName evidence="1">ProRS</shortName>
    </alternativeName>
</protein>
<dbReference type="EC" id="6.1.1.15" evidence="1"/>
<dbReference type="EMBL" id="CP001390">
    <property type="protein sequence ID" value="ACM20754.1"/>
    <property type="molecule type" value="Genomic_DNA"/>
</dbReference>
<dbReference type="RefSeq" id="WP_012647483.1">
    <property type="nucleotide sequence ID" value="NC_011979.1"/>
</dbReference>
<dbReference type="SMR" id="B9LZK1"/>
<dbReference type="STRING" id="316067.Geob_2401"/>
<dbReference type="KEGG" id="geo:Geob_2401"/>
<dbReference type="eggNOG" id="COG0442">
    <property type="taxonomic scope" value="Bacteria"/>
</dbReference>
<dbReference type="HOGENOM" id="CLU_016739_0_0_7"/>
<dbReference type="OrthoDB" id="9809052at2"/>
<dbReference type="Proteomes" id="UP000007721">
    <property type="component" value="Chromosome"/>
</dbReference>
<dbReference type="GO" id="GO:0005829">
    <property type="term" value="C:cytosol"/>
    <property type="evidence" value="ECO:0007669"/>
    <property type="project" value="TreeGrafter"/>
</dbReference>
<dbReference type="GO" id="GO:0002161">
    <property type="term" value="F:aminoacyl-tRNA deacylase activity"/>
    <property type="evidence" value="ECO:0007669"/>
    <property type="project" value="InterPro"/>
</dbReference>
<dbReference type="GO" id="GO:0005524">
    <property type="term" value="F:ATP binding"/>
    <property type="evidence" value="ECO:0007669"/>
    <property type="project" value="UniProtKB-UniRule"/>
</dbReference>
<dbReference type="GO" id="GO:0004827">
    <property type="term" value="F:proline-tRNA ligase activity"/>
    <property type="evidence" value="ECO:0007669"/>
    <property type="project" value="UniProtKB-UniRule"/>
</dbReference>
<dbReference type="GO" id="GO:0006433">
    <property type="term" value="P:prolyl-tRNA aminoacylation"/>
    <property type="evidence" value="ECO:0007669"/>
    <property type="project" value="UniProtKB-UniRule"/>
</dbReference>
<dbReference type="CDD" id="cd04334">
    <property type="entry name" value="ProRS-INS"/>
    <property type="match status" value="1"/>
</dbReference>
<dbReference type="CDD" id="cd00861">
    <property type="entry name" value="ProRS_anticodon_short"/>
    <property type="match status" value="1"/>
</dbReference>
<dbReference type="CDD" id="cd00779">
    <property type="entry name" value="ProRS_core_prok"/>
    <property type="match status" value="1"/>
</dbReference>
<dbReference type="FunFam" id="3.30.930.10:FF:000043">
    <property type="entry name" value="Proline--tRNA ligase"/>
    <property type="match status" value="1"/>
</dbReference>
<dbReference type="FunFam" id="3.30.930.10:FF:000065">
    <property type="entry name" value="Proline--tRNA ligase"/>
    <property type="match status" value="1"/>
</dbReference>
<dbReference type="FunFam" id="3.40.50.800:FF:000011">
    <property type="entry name" value="Proline--tRNA ligase"/>
    <property type="match status" value="1"/>
</dbReference>
<dbReference type="Gene3D" id="3.40.50.800">
    <property type="entry name" value="Anticodon-binding domain"/>
    <property type="match status" value="1"/>
</dbReference>
<dbReference type="Gene3D" id="3.30.930.10">
    <property type="entry name" value="Bira Bifunctional Protein, Domain 2"/>
    <property type="match status" value="2"/>
</dbReference>
<dbReference type="HAMAP" id="MF_01569">
    <property type="entry name" value="Pro_tRNA_synth_type1"/>
    <property type="match status" value="1"/>
</dbReference>
<dbReference type="InterPro" id="IPR002314">
    <property type="entry name" value="aa-tRNA-synt_IIb"/>
</dbReference>
<dbReference type="InterPro" id="IPR006195">
    <property type="entry name" value="aa-tRNA-synth_II"/>
</dbReference>
<dbReference type="InterPro" id="IPR045864">
    <property type="entry name" value="aa-tRNA-synth_II/BPL/LPL"/>
</dbReference>
<dbReference type="InterPro" id="IPR004154">
    <property type="entry name" value="Anticodon-bd"/>
</dbReference>
<dbReference type="InterPro" id="IPR036621">
    <property type="entry name" value="Anticodon-bd_dom_sf"/>
</dbReference>
<dbReference type="InterPro" id="IPR002316">
    <property type="entry name" value="Pro-tRNA-ligase_IIa"/>
</dbReference>
<dbReference type="InterPro" id="IPR004500">
    <property type="entry name" value="Pro-tRNA-synth_IIa_bac-type"/>
</dbReference>
<dbReference type="InterPro" id="IPR023717">
    <property type="entry name" value="Pro-tRNA-Synthase_IIa_type1"/>
</dbReference>
<dbReference type="InterPro" id="IPR050062">
    <property type="entry name" value="Pro-tRNA_synthetase"/>
</dbReference>
<dbReference type="InterPro" id="IPR044140">
    <property type="entry name" value="ProRS_anticodon_short"/>
</dbReference>
<dbReference type="InterPro" id="IPR033730">
    <property type="entry name" value="ProRS_core_prok"/>
</dbReference>
<dbReference type="InterPro" id="IPR036754">
    <property type="entry name" value="YbaK/aa-tRNA-synt-asso_dom_sf"/>
</dbReference>
<dbReference type="InterPro" id="IPR007214">
    <property type="entry name" value="YbaK/aa-tRNA-synth-assoc-dom"/>
</dbReference>
<dbReference type="NCBIfam" id="NF006625">
    <property type="entry name" value="PRK09194.1"/>
    <property type="match status" value="1"/>
</dbReference>
<dbReference type="NCBIfam" id="TIGR00409">
    <property type="entry name" value="proS_fam_II"/>
    <property type="match status" value="1"/>
</dbReference>
<dbReference type="PANTHER" id="PTHR42753">
    <property type="entry name" value="MITOCHONDRIAL RIBOSOME PROTEIN L39/PROLYL-TRNA LIGASE FAMILY MEMBER"/>
    <property type="match status" value="1"/>
</dbReference>
<dbReference type="PANTHER" id="PTHR42753:SF2">
    <property type="entry name" value="PROLINE--TRNA LIGASE"/>
    <property type="match status" value="1"/>
</dbReference>
<dbReference type="Pfam" id="PF03129">
    <property type="entry name" value="HGTP_anticodon"/>
    <property type="match status" value="1"/>
</dbReference>
<dbReference type="Pfam" id="PF00587">
    <property type="entry name" value="tRNA-synt_2b"/>
    <property type="match status" value="1"/>
</dbReference>
<dbReference type="Pfam" id="PF04073">
    <property type="entry name" value="tRNA_edit"/>
    <property type="match status" value="1"/>
</dbReference>
<dbReference type="PIRSF" id="PIRSF001535">
    <property type="entry name" value="ProRS_1"/>
    <property type="match status" value="1"/>
</dbReference>
<dbReference type="PRINTS" id="PR01046">
    <property type="entry name" value="TRNASYNTHPRO"/>
</dbReference>
<dbReference type="SUPFAM" id="SSF52954">
    <property type="entry name" value="Class II aaRS ABD-related"/>
    <property type="match status" value="1"/>
</dbReference>
<dbReference type="SUPFAM" id="SSF55681">
    <property type="entry name" value="Class II aaRS and biotin synthetases"/>
    <property type="match status" value="1"/>
</dbReference>
<dbReference type="SUPFAM" id="SSF55826">
    <property type="entry name" value="YbaK/ProRS associated domain"/>
    <property type="match status" value="1"/>
</dbReference>
<dbReference type="PROSITE" id="PS50862">
    <property type="entry name" value="AA_TRNA_LIGASE_II"/>
    <property type="match status" value="1"/>
</dbReference>
<gene>
    <name evidence="1" type="primary">proS</name>
    <name type="ordered locus">Geob_2401</name>
</gene>
<proteinExistence type="inferred from homology"/>
<name>SYP_GEODF</name>
<keyword id="KW-0030">Aminoacyl-tRNA synthetase</keyword>
<keyword id="KW-0067">ATP-binding</keyword>
<keyword id="KW-0963">Cytoplasm</keyword>
<keyword id="KW-0436">Ligase</keyword>
<keyword id="KW-0547">Nucleotide-binding</keyword>
<keyword id="KW-0648">Protein biosynthesis</keyword>
<keyword id="KW-1185">Reference proteome</keyword>
<organism>
    <name type="scientific">Geotalea daltonii (strain DSM 22248 / JCM 15807 / FRC-32)</name>
    <name type="common">Geobacter daltonii</name>
    <dbReference type="NCBI Taxonomy" id="316067"/>
    <lineage>
        <taxon>Bacteria</taxon>
        <taxon>Pseudomonadati</taxon>
        <taxon>Thermodesulfobacteriota</taxon>
        <taxon>Desulfuromonadia</taxon>
        <taxon>Geobacterales</taxon>
        <taxon>Geobacteraceae</taxon>
        <taxon>Geotalea</taxon>
    </lineage>
</organism>
<feature type="chain" id="PRO_1000185502" description="Proline--tRNA ligase">
    <location>
        <begin position="1"/>
        <end position="570"/>
    </location>
</feature>
<reference key="1">
    <citation type="submission" date="2009-01" db="EMBL/GenBank/DDBJ databases">
        <title>Complete sequence of Geobacter sp. FRC-32.</title>
        <authorList>
            <consortium name="US DOE Joint Genome Institute"/>
            <person name="Lucas S."/>
            <person name="Copeland A."/>
            <person name="Lapidus A."/>
            <person name="Glavina del Rio T."/>
            <person name="Dalin E."/>
            <person name="Tice H."/>
            <person name="Bruce D."/>
            <person name="Goodwin L."/>
            <person name="Pitluck S."/>
            <person name="Saunders E."/>
            <person name="Brettin T."/>
            <person name="Detter J.C."/>
            <person name="Han C."/>
            <person name="Larimer F."/>
            <person name="Land M."/>
            <person name="Hauser L."/>
            <person name="Kyrpides N."/>
            <person name="Ovchinnikova G."/>
            <person name="Kostka J."/>
            <person name="Richardson P."/>
        </authorList>
    </citation>
    <scope>NUCLEOTIDE SEQUENCE [LARGE SCALE GENOMIC DNA]</scope>
    <source>
        <strain>DSM 22248 / JCM 15807 / FRC-32</strain>
    </source>
</reference>
<evidence type="ECO:0000255" key="1">
    <source>
        <dbReference type="HAMAP-Rule" id="MF_01569"/>
    </source>
</evidence>
<sequence length="570" mass="63391">MRYSQYFIPTVKETPSDAEVISHQLMLRGGMIRKLAAGVYNYLPLGLRSIRKVENIVREEMNRAGAIELLMPTVQPAELWQESGRWEQYGKELLRFRDRKDTEFCLGPTHEEVITDLVRREVKSYRQLPINLYQIQGKFRDEIRPRFGLMRGREFIMKDAYSFDVDEKAADISYDKMYQAYRRIFERCGLKFRAVEADTGSIGGSWSHEFMVLAESGEDAIVSCTACDYAANVEKAEARQSAVTEHADPRDMEKVSTPEKKSIEEVAAFLAIHESSLVKTLVLLADNEPVVALLRGDHELNEIKLKNILGCDTLEMAGEEVVVKVTGAPTGFAGPVGLKAKIIADLAVQGMKNFVTGANAKDLHLKNVNLGRDFNVTTFADIRNVVLGDPCPRCESGTLEMWRGIEVGHVFKLGTKYSKAMKATYLDADGKEQIIFMGCYGIGIGRTVAACIEQNHDENGIIFPLPIAPFHCIISALNMKEDVVREASEAIYGQLAAAGIEVLLDDRDERPGFKFKDADLIGIPMRIVVGSKNLADGKVELKCRRSGEVELLSIADAVEKVKAAVNAALK</sequence>